<organism>
    <name type="scientific">Mycolicibacterium gilvum (strain PYR-GCK)</name>
    <name type="common">Mycobacterium gilvum (strain PYR-GCK)</name>
    <dbReference type="NCBI Taxonomy" id="350054"/>
    <lineage>
        <taxon>Bacteria</taxon>
        <taxon>Bacillati</taxon>
        <taxon>Actinomycetota</taxon>
        <taxon>Actinomycetes</taxon>
        <taxon>Mycobacteriales</taxon>
        <taxon>Mycobacteriaceae</taxon>
        <taxon>Mycolicibacterium</taxon>
    </lineage>
</organism>
<proteinExistence type="inferred from homology"/>
<dbReference type="EC" id="2.5.1.6" evidence="1"/>
<dbReference type="EMBL" id="CP000656">
    <property type="protein sequence ID" value="ABP46209.1"/>
    <property type="molecule type" value="Genomic_DNA"/>
</dbReference>
<dbReference type="SMR" id="A4TBZ0"/>
<dbReference type="STRING" id="350054.Mflv_3737"/>
<dbReference type="KEGG" id="mgi:Mflv_3737"/>
<dbReference type="eggNOG" id="COG0192">
    <property type="taxonomic scope" value="Bacteria"/>
</dbReference>
<dbReference type="HOGENOM" id="CLU_041802_1_1_11"/>
<dbReference type="OrthoDB" id="9801686at2"/>
<dbReference type="UniPathway" id="UPA00315">
    <property type="reaction ID" value="UER00080"/>
</dbReference>
<dbReference type="GO" id="GO:0005737">
    <property type="term" value="C:cytoplasm"/>
    <property type="evidence" value="ECO:0007669"/>
    <property type="project" value="UniProtKB-SubCell"/>
</dbReference>
<dbReference type="GO" id="GO:0005524">
    <property type="term" value="F:ATP binding"/>
    <property type="evidence" value="ECO:0007669"/>
    <property type="project" value="UniProtKB-UniRule"/>
</dbReference>
<dbReference type="GO" id="GO:0000287">
    <property type="term" value="F:magnesium ion binding"/>
    <property type="evidence" value="ECO:0007669"/>
    <property type="project" value="UniProtKB-UniRule"/>
</dbReference>
<dbReference type="GO" id="GO:0004478">
    <property type="term" value="F:methionine adenosyltransferase activity"/>
    <property type="evidence" value="ECO:0007669"/>
    <property type="project" value="UniProtKB-UniRule"/>
</dbReference>
<dbReference type="GO" id="GO:0006730">
    <property type="term" value="P:one-carbon metabolic process"/>
    <property type="evidence" value="ECO:0007669"/>
    <property type="project" value="UniProtKB-KW"/>
</dbReference>
<dbReference type="GO" id="GO:0006556">
    <property type="term" value="P:S-adenosylmethionine biosynthetic process"/>
    <property type="evidence" value="ECO:0007669"/>
    <property type="project" value="UniProtKB-UniRule"/>
</dbReference>
<dbReference type="CDD" id="cd18079">
    <property type="entry name" value="S-AdoMet_synt"/>
    <property type="match status" value="1"/>
</dbReference>
<dbReference type="FunFam" id="3.30.300.10:FF:000006">
    <property type="entry name" value="S-adenosylmethionine synthase"/>
    <property type="match status" value="1"/>
</dbReference>
<dbReference type="Gene3D" id="3.30.300.10">
    <property type="match status" value="3"/>
</dbReference>
<dbReference type="HAMAP" id="MF_00086">
    <property type="entry name" value="S_AdoMet_synth1"/>
    <property type="match status" value="1"/>
</dbReference>
<dbReference type="InterPro" id="IPR022631">
    <property type="entry name" value="ADOMET_SYNTHASE_CS"/>
</dbReference>
<dbReference type="InterPro" id="IPR022630">
    <property type="entry name" value="S-AdoMet_synt_C"/>
</dbReference>
<dbReference type="InterPro" id="IPR022629">
    <property type="entry name" value="S-AdoMet_synt_central"/>
</dbReference>
<dbReference type="InterPro" id="IPR022628">
    <property type="entry name" value="S-AdoMet_synt_N"/>
</dbReference>
<dbReference type="InterPro" id="IPR002133">
    <property type="entry name" value="S-AdoMet_synthetase"/>
</dbReference>
<dbReference type="InterPro" id="IPR022636">
    <property type="entry name" value="S-AdoMet_synthetase_sfam"/>
</dbReference>
<dbReference type="NCBIfam" id="TIGR01034">
    <property type="entry name" value="metK"/>
    <property type="match status" value="1"/>
</dbReference>
<dbReference type="PANTHER" id="PTHR11964">
    <property type="entry name" value="S-ADENOSYLMETHIONINE SYNTHETASE"/>
    <property type="match status" value="1"/>
</dbReference>
<dbReference type="Pfam" id="PF02773">
    <property type="entry name" value="S-AdoMet_synt_C"/>
    <property type="match status" value="1"/>
</dbReference>
<dbReference type="Pfam" id="PF02772">
    <property type="entry name" value="S-AdoMet_synt_M"/>
    <property type="match status" value="1"/>
</dbReference>
<dbReference type="Pfam" id="PF00438">
    <property type="entry name" value="S-AdoMet_synt_N"/>
    <property type="match status" value="1"/>
</dbReference>
<dbReference type="PIRSF" id="PIRSF000497">
    <property type="entry name" value="MAT"/>
    <property type="match status" value="1"/>
</dbReference>
<dbReference type="SUPFAM" id="SSF55973">
    <property type="entry name" value="S-adenosylmethionine synthetase"/>
    <property type="match status" value="3"/>
</dbReference>
<dbReference type="PROSITE" id="PS00376">
    <property type="entry name" value="ADOMET_SYNTHASE_1"/>
    <property type="match status" value="1"/>
</dbReference>
<dbReference type="PROSITE" id="PS00377">
    <property type="entry name" value="ADOMET_SYNTHASE_2"/>
    <property type="match status" value="1"/>
</dbReference>
<protein>
    <recommendedName>
        <fullName evidence="1">S-adenosylmethionine synthase</fullName>
        <shortName evidence="1">AdoMet synthase</shortName>
        <ecNumber evidence="1">2.5.1.6</ecNumber>
    </recommendedName>
    <alternativeName>
        <fullName evidence="1">MAT</fullName>
    </alternativeName>
    <alternativeName>
        <fullName evidence="1">Methionine adenosyltransferase</fullName>
    </alternativeName>
</protein>
<accession>A4TBZ0</accession>
<name>METK_MYCGI</name>
<evidence type="ECO:0000255" key="1">
    <source>
        <dbReference type="HAMAP-Rule" id="MF_00086"/>
    </source>
</evidence>
<reference key="1">
    <citation type="submission" date="2007-04" db="EMBL/GenBank/DDBJ databases">
        <title>Complete sequence of chromosome of Mycobacterium gilvum PYR-GCK.</title>
        <authorList>
            <consortium name="US DOE Joint Genome Institute"/>
            <person name="Copeland A."/>
            <person name="Lucas S."/>
            <person name="Lapidus A."/>
            <person name="Barry K."/>
            <person name="Detter J.C."/>
            <person name="Glavina del Rio T."/>
            <person name="Hammon N."/>
            <person name="Israni S."/>
            <person name="Dalin E."/>
            <person name="Tice H."/>
            <person name="Pitluck S."/>
            <person name="Chain P."/>
            <person name="Malfatti S."/>
            <person name="Shin M."/>
            <person name="Vergez L."/>
            <person name="Schmutz J."/>
            <person name="Larimer F."/>
            <person name="Land M."/>
            <person name="Hauser L."/>
            <person name="Kyrpides N."/>
            <person name="Mikhailova N."/>
            <person name="Miller C."/>
            <person name="Richardson P."/>
        </authorList>
    </citation>
    <scope>NUCLEOTIDE SEQUENCE [LARGE SCALE GENOMIC DNA]</scope>
    <source>
        <strain>PYR-GCK</strain>
    </source>
</reference>
<feature type="chain" id="PRO_1000075382" description="S-adenosylmethionine synthase">
    <location>
        <begin position="1"/>
        <end position="402"/>
    </location>
</feature>
<feature type="region of interest" description="Flexible loop" evidence="1">
    <location>
        <begin position="103"/>
        <end position="113"/>
    </location>
</feature>
<feature type="binding site" description="in other chain" evidence="1">
    <location>
        <position position="16"/>
    </location>
    <ligand>
        <name>ATP</name>
        <dbReference type="ChEBI" id="CHEBI:30616"/>
        <note>ligand shared between two neighboring subunits</note>
    </ligand>
</feature>
<feature type="binding site" evidence="1">
    <location>
        <position position="18"/>
    </location>
    <ligand>
        <name>Mg(2+)</name>
        <dbReference type="ChEBI" id="CHEBI:18420"/>
    </ligand>
</feature>
<feature type="binding site" evidence="1">
    <location>
        <position position="44"/>
    </location>
    <ligand>
        <name>K(+)</name>
        <dbReference type="ChEBI" id="CHEBI:29103"/>
    </ligand>
</feature>
<feature type="binding site" description="in other chain" evidence="1">
    <location>
        <position position="57"/>
    </location>
    <ligand>
        <name>L-methionine</name>
        <dbReference type="ChEBI" id="CHEBI:57844"/>
        <note>ligand shared between two neighboring subunits</note>
    </ligand>
</feature>
<feature type="binding site" description="in other chain" evidence="1">
    <location>
        <position position="103"/>
    </location>
    <ligand>
        <name>L-methionine</name>
        <dbReference type="ChEBI" id="CHEBI:57844"/>
        <note>ligand shared between two neighboring subunits</note>
    </ligand>
</feature>
<feature type="binding site" description="in other chain" evidence="1">
    <location>
        <begin position="178"/>
        <end position="180"/>
    </location>
    <ligand>
        <name>ATP</name>
        <dbReference type="ChEBI" id="CHEBI:30616"/>
        <note>ligand shared between two neighboring subunits</note>
    </ligand>
</feature>
<feature type="binding site" description="in other chain" evidence="1">
    <location>
        <begin position="249"/>
        <end position="250"/>
    </location>
    <ligand>
        <name>ATP</name>
        <dbReference type="ChEBI" id="CHEBI:30616"/>
        <note>ligand shared between two neighboring subunits</note>
    </ligand>
</feature>
<feature type="binding site" evidence="1">
    <location>
        <position position="258"/>
    </location>
    <ligand>
        <name>ATP</name>
        <dbReference type="ChEBI" id="CHEBI:30616"/>
        <note>ligand shared between two neighboring subunits</note>
    </ligand>
</feature>
<feature type="binding site" evidence="1">
    <location>
        <position position="258"/>
    </location>
    <ligand>
        <name>L-methionine</name>
        <dbReference type="ChEBI" id="CHEBI:57844"/>
        <note>ligand shared between two neighboring subunits</note>
    </ligand>
</feature>
<feature type="binding site" description="in other chain" evidence="1">
    <location>
        <begin position="264"/>
        <end position="265"/>
    </location>
    <ligand>
        <name>ATP</name>
        <dbReference type="ChEBI" id="CHEBI:30616"/>
        <note>ligand shared between two neighboring subunits</note>
    </ligand>
</feature>
<feature type="binding site" evidence="1">
    <location>
        <position position="281"/>
    </location>
    <ligand>
        <name>ATP</name>
        <dbReference type="ChEBI" id="CHEBI:30616"/>
        <note>ligand shared between two neighboring subunits</note>
    </ligand>
</feature>
<feature type="binding site" evidence="1">
    <location>
        <position position="285"/>
    </location>
    <ligand>
        <name>ATP</name>
        <dbReference type="ChEBI" id="CHEBI:30616"/>
        <note>ligand shared between two neighboring subunits</note>
    </ligand>
</feature>
<feature type="binding site" description="in other chain" evidence="1">
    <location>
        <position position="289"/>
    </location>
    <ligand>
        <name>L-methionine</name>
        <dbReference type="ChEBI" id="CHEBI:57844"/>
        <note>ligand shared between two neighboring subunits</note>
    </ligand>
</feature>
<comment type="function">
    <text evidence="1">Catalyzes the formation of S-adenosylmethionine (AdoMet) from methionine and ATP. The overall synthetic reaction is composed of two sequential steps, AdoMet formation and the subsequent tripolyphosphate hydrolysis which occurs prior to release of AdoMet from the enzyme.</text>
</comment>
<comment type="catalytic activity">
    <reaction evidence="1">
        <text>L-methionine + ATP + H2O = S-adenosyl-L-methionine + phosphate + diphosphate</text>
        <dbReference type="Rhea" id="RHEA:21080"/>
        <dbReference type="ChEBI" id="CHEBI:15377"/>
        <dbReference type="ChEBI" id="CHEBI:30616"/>
        <dbReference type="ChEBI" id="CHEBI:33019"/>
        <dbReference type="ChEBI" id="CHEBI:43474"/>
        <dbReference type="ChEBI" id="CHEBI:57844"/>
        <dbReference type="ChEBI" id="CHEBI:59789"/>
        <dbReference type="EC" id="2.5.1.6"/>
    </reaction>
</comment>
<comment type="cofactor">
    <cofactor evidence="1">
        <name>Mg(2+)</name>
        <dbReference type="ChEBI" id="CHEBI:18420"/>
    </cofactor>
    <text evidence="1">Binds 2 divalent ions per subunit.</text>
</comment>
<comment type="cofactor">
    <cofactor evidence="1">
        <name>K(+)</name>
        <dbReference type="ChEBI" id="CHEBI:29103"/>
    </cofactor>
    <text evidence="1">Binds 1 potassium ion per subunit.</text>
</comment>
<comment type="pathway">
    <text evidence="1">Amino-acid biosynthesis; S-adenosyl-L-methionine biosynthesis; S-adenosyl-L-methionine from L-methionine: step 1/1.</text>
</comment>
<comment type="subunit">
    <text evidence="1">Homotetramer; dimer of dimers.</text>
</comment>
<comment type="subcellular location">
    <subcellularLocation>
        <location evidence="1">Cytoplasm</location>
    </subcellularLocation>
</comment>
<comment type="similarity">
    <text evidence="1">Belongs to the AdoMet synthase family.</text>
</comment>
<gene>
    <name evidence="1" type="primary">metK</name>
    <name type="ordered locus">Mflv_3737</name>
</gene>
<sequence length="402" mass="42943">MSEARLFTSESVTEGHPDKICDAISDSVLDALLAGDPKSRVAVETLVTTGQVHVVGEVTTNAKEAFADITNTVRERILEIGYDHSDKGFDGETCGVNIGIGRQSPDIAQGVDTAHETRVGGAADPLDSQGAGDQGLMFGYAIADTPELMPLPIALAHRLSRKLTEVRKNGTLDYLRPDGKTQVTVQYDGTTPVRLDTVVLSTQHADGIELDSQLEPEIKQHVIDAVLTELGHQTLDTSNPRILVNPTGKFVLGGPMGDAGLTGRKIIVDTYGGWARHGGGAFSGKDPSKVDRSAAYAMRWVAKNVVAAGLAERVEVQVAYAIGKAAPVGLFVETFGSETVDPVKIEKAIGEVFDLRPGAIVRDLDLLRPIYAPTAAYGHFGRTDIELPWEQLNKVDDLKSAV</sequence>
<keyword id="KW-0067">ATP-binding</keyword>
<keyword id="KW-0963">Cytoplasm</keyword>
<keyword id="KW-0460">Magnesium</keyword>
<keyword id="KW-0479">Metal-binding</keyword>
<keyword id="KW-0547">Nucleotide-binding</keyword>
<keyword id="KW-0554">One-carbon metabolism</keyword>
<keyword id="KW-0630">Potassium</keyword>
<keyword id="KW-0808">Transferase</keyword>